<dbReference type="EMBL" id="AF233528">
    <property type="protein sequence ID" value="AAF91285.2"/>
    <property type="molecule type" value="mRNA"/>
</dbReference>
<dbReference type="EMBL" id="AB026655">
    <property type="protein sequence ID" value="BAB02102.1"/>
    <property type="molecule type" value="Genomic_DNA"/>
</dbReference>
<dbReference type="EMBL" id="CP002686">
    <property type="protein sequence ID" value="AEE76717.1"/>
    <property type="molecule type" value="Genomic_DNA"/>
</dbReference>
<dbReference type="EMBL" id="CP002686">
    <property type="protein sequence ID" value="AEE76718.1"/>
    <property type="molecule type" value="Genomic_DNA"/>
</dbReference>
<dbReference type="EMBL" id="AK175267">
    <property type="protein sequence ID" value="BAD43030.1"/>
    <property type="status" value="ALT_INIT"/>
    <property type="molecule type" value="mRNA"/>
</dbReference>
<dbReference type="EMBL" id="BT020394">
    <property type="protein sequence ID" value="AAV91340.1"/>
    <property type="status" value="ALT_INIT"/>
    <property type="molecule type" value="mRNA"/>
</dbReference>
<dbReference type="EMBL" id="BT021921">
    <property type="protein sequence ID" value="AAX49370.1"/>
    <property type="status" value="ALT_INIT"/>
    <property type="molecule type" value="mRNA"/>
</dbReference>
<dbReference type="RefSeq" id="NP_001154639.1">
    <property type="nucleotide sequence ID" value="NM_001161167.1"/>
</dbReference>
<dbReference type="RefSeq" id="NP_188951.2">
    <property type="nucleotide sequence ID" value="NM_113211.2"/>
</dbReference>
<dbReference type="SMR" id="Q682V0"/>
<dbReference type="BioGRID" id="7217">
    <property type="interactions" value="3"/>
</dbReference>
<dbReference type="FunCoup" id="Q682V0">
    <property type="interactions" value="1391"/>
</dbReference>
<dbReference type="IntAct" id="Q682V0">
    <property type="interactions" value="1"/>
</dbReference>
<dbReference type="STRING" id="3702.Q682V0"/>
<dbReference type="iPTMnet" id="Q682V0"/>
<dbReference type="PaxDb" id="3702-AT3G23100.2"/>
<dbReference type="ProteomicsDB" id="242795"/>
<dbReference type="EnsemblPlants" id="AT3G23100.1">
    <property type="protein sequence ID" value="AT3G23100.1"/>
    <property type="gene ID" value="AT3G23100"/>
</dbReference>
<dbReference type="EnsemblPlants" id="AT3G23100.2">
    <property type="protein sequence ID" value="AT3G23100.2"/>
    <property type="gene ID" value="AT3G23100"/>
</dbReference>
<dbReference type="GeneID" id="821885"/>
<dbReference type="Gramene" id="AT3G23100.1">
    <property type="protein sequence ID" value="AT3G23100.1"/>
    <property type="gene ID" value="AT3G23100"/>
</dbReference>
<dbReference type="Gramene" id="AT3G23100.2">
    <property type="protein sequence ID" value="AT3G23100.2"/>
    <property type="gene ID" value="AT3G23100"/>
</dbReference>
<dbReference type="KEGG" id="ath:AT3G23100"/>
<dbReference type="Araport" id="AT3G23100"/>
<dbReference type="TAIR" id="AT3G23100">
    <property type="gene designation" value="XRCC4"/>
</dbReference>
<dbReference type="eggNOG" id="ENOG502QWJA">
    <property type="taxonomic scope" value="Eukaryota"/>
</dbReference>
<dbReference type="HOGENOM" id="CLU_063979_0_0_1"/>
<dbReference type="InParanoid" id="Q682V0"/>
<dbReference type="OMA" id="FIKGTWF"/>
<dbReference type="PhylomeDB" id="Q682V0"/>
<dbReference type="PRO" id="PR:Q682V0"/>
<dbReference type="Proteomes" id="UP000006548">
    <property type="component" value="Chromosome 3"/>
</dbReference>
<dbReference type="ExpressionAtlas" id="Q682V0">
    <property type="expression patterns" value="baseline and differential"/>
</dbReference>
<dbReference type="GO" id="GO:0005634">
    <property type="term" value="C:nucleus"/>
    <property type="evidence" value="ECO:0007669"/>
    <property type="project" value="UniProtKB-SubCell"/>
</dbReference>
<dbReference type="GO" id="GO:0005524">
    <property type="term" value="F:ATP binding"/>
    <property type="evidence" value="ECO:0007669"/>
    <property type="project" value="InterPro"/>
</dbReference>
<dbReference type="GO" id="GO:0003677">
    <property type="term" value="F:DNA binding"/>
    <property type="evidence" value="ECO:0007669"/>
    <property type="project" value="InterPro"/>
</dbReference>
<dbReference type="GO" id="GO:0006310">
    <property type="term" value="P:DNA recombination"/>
    <property type="evidence" value="ECO:0007669"/>
    <property type="project" value="UniProtKB-KW"/>
</dbReference>
<dbReference type="GO" id="GO:0006303">
    <property type="term" value="P:double-strand break repair via nonhomologous end joining"/>
    <property type="evidence" value="ECO:0007669"/>
    <property type="project" value="UniProtKB-ARBA"/>
</dbReference>
<dbReference type="FunFam" id="1.20.5.370:FF:000015">
    <property type="match status" value="1"/>
</dbReference>
<dbReference type="Gene3D" id="1.20.5.370">
    <property type="match status" value="1"/>
</dbReference>
<dbReference type="Gene3D" id="2.170.210.10">
    <property type="entry name" value="DNA double-strand break repair and VJ recombination XRCC4, N-terminal"/>
    <property type="match status" value="1"/>
</dbReference>
<dbReference type="InterPro" id="IPR005479">
    <property type="entry name" value="CbamoylP_synth_lsu-like_ATP-bd"/>
</dbReference>
<dbReference type="InterPro" id="IPR010585">
    <property type="entry name" value="DNA_repair_prot_XRCC4"/>
</dbReference>
<dbReference type="InterPro" id="IPR014751">
    <property type="entry name" value="XRCC4-like_C"/>
</dbReference>
<dbReference type="InterPro" id="IPR038051">
    <property type="entry name" value="XRCC4-like_N_sf"/>
</dbReference>
<dbReference type="InterPro" id="IPR053961">
    <property type="entry name" value="XRCC4_N"/>
</dbReference>
<dbReference type="InterPro" id="IPR009089">
    <property type="entry name" value="XRCC4_N_sf"/>
</dbReference>
<dbReference type="PANTHER" id="PTHR28559">
    <property type="entry name" value="DNA REPAIR PROTEIN XRCC4"/>
    <property type="match status" value="1"/>
</dbReference>
<dbReference type="PANTHER" id="PTHR28559:SF1">
    <property type="entry name" value="DNA REPAIR PROTEIN XRCC4"/>
    <property type="match status" value="1"/>
</dbReference>
<dbReference type="Pfam" id="PF06632">
    <property type="entry name" value="XRCC4"/>
    <property type="match status" value="1"/>
</dbReference>
<dbReference type="SUPFAM" id="SSF58022">
    <property type="entry name" value="XRCC4, C-terminal oligomerization domain"/>
    <property type="match status" value="1"/>
</dbReference>
<dbReference type="SUPFAM" id="SSF50809">
    <property type="entry name" value="XRCC4, N-terminal domain"/>
    <property type="match status" value="1"/>
</dbReference>
<dbReference type="PROSITE" id="PS00867">
    <property type="entry name" value="CPSASE_2"/>
    <property type="match status" value="1"/>
</dbReference>
<sequence length="264" mass="29854">MIGVDSKSSSTTFIETMVESEKTKHTCLRLEISGADPIFVKGTWHNSRFDISVTDGSSSWICNATEEEVAERAAQWDQPVSEYLKLAEQYLGFQQPNSVYSFSDALEGSKRLSWTFEKEGTKLEWRWKCKPSDDSKKITVGILDFLMEANIRLSEEVVNKTRSFEKMRSEAERCLAQGEKLCDEKTEFESATYAKFLSVLNAKKAKLRALRDKEDSVRVVEEEESTDKAESFESGRSDDEKSEEEASKKATSSKARGGKRAARS</sequence>
<keyword id="KW-0227">DNA damage</keyword>
<keyword id="KW-0233">DNA recombination</keyword>
<keyword id="KW-0234">DNA repair</keyword>
<keyword id="KW-0539">Nucleus</keyword>
<keyword id="KW-1185">Reference proteome</keyword>
<name>XRCC4_ARATH</name>
<feature type="chain" id="PRO_0000066049" description="DNA repair protein XRCC4">
    <location>
        <begin position="1"/>
        <end position="264"/>
    </location>
</feature>
<feature type="region of interest" description="Disordered" evidence="2">
    <location>
        <begin position="213"/>
        <end position="264"/>
    </location>
</feature>
<feature type="compositionally biased region" description="Basic and acidic residues" evidence="2">
    <location>
        <begin position="213"/>
        <end position="248"/>
    </location>
</feature>
<protein>
    <recommendedName>
        <fullName>DNA repair protein XRCC4</fullName>
    </recommendedName>
</protein>
<evidence type="ECO:0000250" key="1">
    <source>
        <dbReference type="UniProtKB" id="Q13426"/>
    </source>
</evidence>
<evidence type="ECO:0000256" key="2">
    <source>
        <dbReference type="SAM" id="MobiDB-lite"/>
    </source>
</evidence>
<evidence type="ECO:0000269" key="3">
    <source>
    </source>
</evidence>
<evidence type="ECO:0000269" key="4">
    <source>
    </source>
</evidence>
<evidence type="ECO:0000305" key="5"/>
<organism>
    <name type="scientific">Arabidopsis thaliana</name>
    <name type="common">Mouse-ear cress</name>
    <dbReference type="NCBI Taxonomy" id="3702"/>
    <lineage>
        <taxon>Eukaryota</taxon>
        <taxon>Viridiplantae</taxon>
        <taxon>Streptophyta</taxon>
        <taxon>Embryophyta</taxon>
        <taxon>Tracheophyta</taxon>
        <taxon>Spermatophyta</taxon>
        <taxon>Magnoliopsida</taxon>
        <taxon>eudicotyledons</taxon>
        <taxon>Gunneridae</taxon>
        <taxon>Pentapetalae</taxon>
        <taxon>rosids</taxon>
        <taxon>malvids</taxon>
        <taxon>Brassicales</taxon>
        <taxon>Brassicaceae</taxon>
        <taxon>Camelineae</taxon>
        <taxon>Arabidopsis</taxon>
    </lineage>
</organism>
<accession>Q682V0</accession>
<accession>Q9LS81</accession>
<reference key="1">
    <citation type="journal article" date="2000" name="Plant J.">
        <title>Arabidopsis DNA ligase IV is induced by gamma-irradiation and interacts with an Arabidopsis homologue of the double strand break repair protein XRCC4.</title>
        <authorList>
            <person name="West C.E."/>
            <person name="Waterworth W.M."/>
            <person name="Jiang Q."/>
            <person name="Bray C.M."/>
        </authorList>
    </citation>
    <scope>NUCLEOTIDE SEQUENCE [MRNA]</scope>
    <scope>INDUCTION</scope>
    <scope>INTERACTION WITH LIG4</scope>
    <source>
        <strain>cv. Columbia</strain>
    </source>
</reference>
<reference key="2">
    <citation type="journal article" date="2000" name="DNA Res.">
        <title>Structural analysis of Arabidopsis thaliana chromosome 3. I. Sequence features of the regions of 4,504,864 bp covered by sixty P1 and TAC clones.</title>
        <authorList>
            <person name="Sato S."/>
            <person name="Nakamura Y."/>
            <person name="Kaneko T."/>
            <person name="Katoh T."/>
            <person name="Asamizu E."/>
            <person name="Tabata S."/>
        </authorList>
    </citation>
    <scope>NUCLEOTIDE SEQUENCE [LARGE SCALE GENOMIC DNA]</scope>
    <source>
        <strain>cv. Columbia</strain>
    </source>
</reference>
<reference key="3">
    <citation type="journal article" date="2017" name="Plant J.">
        <title>Araport11: a complete reannotation of the Arabidopsis thaliana reference genome.</title>
        <authorList>
            <person name="Cheng C.Y."/>
            <person name="Krishnakumar V."/>
            <person name="Chan A.P."/>
            <person name="Thibaud-Nissen F."/>
            <person name="Schobel S."/>
            <person name="Town C.D."/>
        </authorList>
    </citation>
    <scope>GENOME REANNOTATION</scope>
    <source>
        <strain>cv. Columbia</strain>
    </source>
</reference>
<reference key="4">
    <citation type="submission" date="2004-09" db="EMBL/GenBank/DDBJ databases">
        <title>Large-scale analysis of RIKEN Arabidopsis full-length (RAFL) cDNAs.</title>
        <authorList>
            <person name="Totoki Y."/>
            <person name="Seki M."/>
            <person name="Ishida J."/>
            <person name="Nakajima M."/>
            <person name="Enju A."/>
            <person name="Kamiya A."/>
            <person name="Narusaka M."/>
            <person name="Shin-i T."/>
            <person name="Nakagawa M."/>
            <person name="Sakamoto N."/>
            <person name="Oishi K."/>
            <person name="Kohara Y."/>
            <person name="Kobayashi M."/>
            <person name="Toyoda A."/>
            <person name="Sakaki Y."/>
            <person name="Sakurai T."/>
            <person name="Iida K."/>
            <person name="Akiyama K."/>
            <person name="Satou M."/>
            <person name="Toyoda T."/>
            <person name="Konagaya A."/>
            <person name="Carninci P."/>
            <person name="Kawai J."/>
            <person name="Hayashizaki Y."/>
            <person name="Shinozaki K."/>
        </authorList>
    </citation>
    <scope>NUCLEOTIDE SEQUENCE [LARGE SCALE MRNA] OF 8-264</scope>
    <source>
        <strain>cv. Columbia</strain>
    </source>
</reference>
<reference key="5">
    <citation type="submission" date="2005-03" db="EMBL/GenBank/DDBJ databases">
        <title>Arabidopsis ORF clones.</title>
        <authorList>
            <person name="Kim C.J."/>
            <person name="Chen H."/>
            <person name="Cheuk R.F."/>
            <person name="Shinn P."/>
            <person name="Ecker J.R."/>
        </authorList>
    </citation>
    <scope>NUCLEOTIDE SEQUENCE [LARGE SCALE MRNA] OF 15-264</scope>
    <source>
        <strain>cv. Columbia</strain>
    </source>
</reference>
<reference key="6">
    <citation type="journal article" date="2013" name="Plant Physiol.">
        <title>Involvement of AtPollambda in the repair of high salt- and DNA cross-linking agent-induced double strand breaks in Arabidopsis.</title>
        <authorList>
            <person name="Roy S."/>
            <person name="Choudhury S.R."/>
            <person name="Sengupta D.N."/>
            <person name="Das K.P."/>
        </authorList>
    </citation>
    <scope>INTERACTION WITH POLL</scope>
</reference>
<comment type="function">
    <text evidence="1">May be involved in DNA non-homologous end joining (NHEJ) required for double-strand break repair. May bind to DNA. The LIG4-XRCC4 complex is probably responsible for the NHEJ ligation step, and XRCC4 may enhance the joining activity of LIG4 (By similarity).</text>
</comment>
<comment type="subunit">
    <text evidence="3 4">Interacts with LIG4 and specifically binds its tandem BRCT domains (PubMed:11029705). Interacts with POLL (PubMed:23660835).</text>
</comment>
<comment type="interaction">
    <interactant intactId="EBI-2128002">
        <id>Q682V0</id>
    </interactant>
    <interactant intactId="EBI-2127971">
        <id>Q9LL84</id>
        <label>LIG4</label>
    </interactant>
    <organismsDiffer>false</organismsDiffer>
    <experiments>2</experiments>
</comment>
<comment type="subcellular location">
    <subcellularLocation>
        <location evidence="5">Nucleus</location>
    </subcellularLocation>
</comment>
<comment type="induction">
    <text evidence="3">Slightly induced by gamma radiation, but not by white light or by UV-B.</text>
</comment>
<comment type="similarity">
    <text evidence="5">Belongs to the XRCC4-XLF family. XRCC4 subfamily.</text>
</comment>
<comment type="sequence caution" evidence="5">
    <conflict type="erroneous initiation">
        <sequence resource="EMBL-CDS" id="AAV91340"/>
    </conflict>
</comment>
<comment type="sequence caution" evidence="5">
    <conflict type="erroneous initiation">
        <sequence resource="EMBL-CDS" id="AAX49370"/>
    </conflict>
</comment>
<comment type="sequence caution" evidence="5">
    <conflict type="erroneous initiation">
        <sequence resource="EMBL-CDS" id="BAD43030"/>
    </conflict>
</comment>
<gene>
    <name type="primary">XRCC4</name>
    <name type="ordered locus">At3g23100</name>
    <name type="ORF">MXC7.14</name>
</gene>
<proteinExistence type="evidence at protein level"/>